<protein>
    <recommendedName>
        <fullName evidence="1">Small ribosomal subunit protein uS5</fullName>
    </recommendedName>
    <alternativeName>
        <fullName evidence="2">30S ribosomal protein S5</fullName>
    </alternativeName>
</protein>
<organism>
    <name type="scientific">Histophilus somni (strain 2336)</name>
    <name type="common">Haemophilus somnus</name>
    <dbReference type="NCBI Taxonomy" id="228400"/>
    <lineage>
        <taxon>Bacteria</taxon>
        <taxon>Pseudomonadati</taxon>
        <taxon>Pseudomonadota</taxon>
        <taxon>Gammaproteobacteria</taxon>
        <taxon>Pasteurellales</taxon>
        <taxon>Pasteurellaceae</taxon>
        <taxon>Histophilus</taxon>
    </lineage>
</organism>
<reference key="1">
    <citation type="submission" date="2008-02" db="EMBL/GenBank/DDBJ databases">
        <title>Complete sequence of Haemophilus somnus 2336.</title>
        <authorList>
            <consortium name="US DOE Joint Genome Institute"/>
            <person name="Siddaramappa S."/>
            <person name="Duncan A.J."/>
            <person name="Challacombe J.F."/>
            <person name="Rainey D."/>
            <person name="Gillaspy A.F."/>
            <person name="Carson M."/>
            <person name="Gipson J."/>
            <person name="Gipson M."/>
            <person name="Bruce D."/>
            <person name="Detter J.C."/>
            <person name="Han C.S."/>
            <person name="Land M."/>
            <person name="Tapia R."/>
            <person name="Thompson L.S."/>
            <person name="Orvis J."/>
            <person name="Zaitshik J."/>
            <person name="Barnes G."/>
            <person name="Brettin T.S."/>
            <person name="Dyer D.W."/>
            <person name="Inzana T.J."/>
        </authorList>
    </citation>
    <scope>NUCLEOTIDE SEQUENCE [LARGE SCALE GENOMIC DNA]</scope>
    <source>
        <strain>2336</strain>
    </source>
</reference>
<evidence type="ECO:0000255" key="1">
    <source>
        <dbReference type="HAMAP-Rule" id="MF_01307"/>
    </source>
</evidence>
<evidence type="ECO:0000305" key="2"/>
<proteinExistence type="inferred from homology"/>
<comment type="function">
    <text evidence="1">With S4 and S12 plays an important role in translational accuracy.</text>
</comment>
<comment type="function">
    <text evidence="1">Located at the back of the 30S subunit body where it stabilizes the conformation of the head with respect to the body.</text>
</comment>
<comment type="subunit">
    <text evidence="1">Part of the 30S ribosomal subunit. Contacts proteins S4 and S8.</text>
</comment>
<comment type="domain">
    <text>The N-terminal domain interacts with the head of the 30S subunit; the C-terminal domain interacts with the body and contacts protein S4. The interaction surface between S4 and S5 is involved in control of translational fidelity.</text>
</comment>
<comment type="similarity">
    <text evidence="1">Belongs to the universal ribosomal protein uS5 family.</text>
</comment>
<accession>B0UX31</accession>
<keyword id="KW-0687">Ribonucleoprotein</keyword>
<keyword id="KW-0689">Ribosomal protein</keyword>
<keyword id="KW-0694">RNA-binding</keyword>
<keyword id="KW-0699">rRNA-binding</keyword>
<gene>
    <name evidence="1" type="primary">rpsE</name>
    <name type="ordered locus">HSM_1970</name>
</gene>
<name>RS5_HISS2</name>
<feature type="chain" id="PRO_1000086017" description="Small ribosomal subunit protein uS5">
    <location>
        <begin position="1"/>
        <end position="166"/>
    </location>
</feature>
<feature type="domain" description="S5 DRBM" evidence="1">
    <location>
        <begin position="11"/>
        <end position="74"/>
    </location>
</feature>
<sequence>MASIEKQTGELQEKLIAVNRVSKTVKGGRIMSFTALTVVGDGNGRVGFGYGKAREVPAAIQKAMEKARRNMITVALNEGTLQHPIKGSHTGSRVFMQPASEGTGIIAGGAMRAVLEVAGVRNVLSKAYGSTNPINVVRATIDALANMKSPEMVAAKRGKTVDEILG</sequence>
<dbReference type="EMBL" id="CP000947">
    <property type="protein sequence ID" value="ACA31766.1"/>
    <property type="molecule type" value="Genomic_DNA"/>
</dbReference>
<dbReference type="RefSeq" id="WP_011608232.1">
    <property type="nucleotide sequence ID" value="NC_010519.1"/>
</dbReference>
<dbReference type="SMR" id="B0UX31"/>
<dbReference type="STRING" id="228400.HSM_1970"/>
<dbReference type="GeneID" id="31488281"/>
<dbReference type="KEGG" id="hsm:HSM_1970"/>
<dbReference type="HOGENOM" id="CLU_065898_2_2_6"/>
<dbReference type="GO" id="GO:0015935">
    <property type="term" value="C:small ribosomal subunit"/>
    <property type="evidence" value="ECO:0007669"/>
    <property type="project" value="InterPro"/>
</dbReference>
<dbReference type="GO" id="GO:0019843">
    <property type="term" value="F:rRNA binding"/>
    <property type="evidence" value="ECO:0007669"/>
    <property type="project" value="UniProtKB-UniRule"/>
</dbReference>
<dbReference type="GO" id="GO:0003735">
    <property type="term" value="F:structural constituent of ribosome"/>
    <property type="evidence" value="ECO:0007669"/>
    <property type="project" value="InterPro"/>
</dbReference>
<dbReference type="GO" id="GO:0006412">
    <property type="term" value="P:translation"/>
    <property type="evidence" value="ECO:0007669"/>
    <property type="project" value="UniProtKB-UniRule"/>
</dbReference>
<dbReference type="FunFam" id="3.30.160.20:FF:000001">
    <property type="entry name" value="30S ribosomal protein S5"/>
    <property type="match status" value="1"/>
</dbReference>
<dbReference type="FunFam" id="3.30.230.10:FF:000002">
    <property type="entry name" value="30S ribosomal protein S5"/>
    <property type="match status" value="1"/>
</dbReference>
<dbReference type="Gene3D" id="3.30.160.20">
    <property type="match status" value="1"/>
</dbReference>
<dbReference type="Gene3D" id="3.30.230.10">
    <property type="match status" value="1"/>
</dbReference>
<dbReference type="HAMAP" id="MF_01307_B">
    <property type="entry name" value="Ribosomal_uS5_B"/>
    <property type="match status" value="1"/>
</dbReference>
<dbReference type="InterPro" id="IPR020568">
    <property type="entry name" value="Ribosomal_Su5_D2-typ_SF"/>
</dbReference>
<dbReference type="InterPro" id="IPR000851">
    <property type="entry name" value="Ribosomal_uS5"/>
</dbReference>
<dbReference type="InterPro" id="IPR005712">
    <property type="entry name" value="Ribosomal_uS5_bac-type"/>
</dbReference>
<dbReference type="InterPro" id="IPR005324">
    <property type="entry name" value="Ribosomal_uS5_C"/>
</dbReference>
<dbReference type="InterPro" id="IPR013810">
    <property type="entry name" value="Ribosomal_uS5_N"/>
</dbReference>
<dbReference type="InterPro" id="IPR018192">
    <property type="entry name" value="Ribosomal_uS5_N_CS"/>
</dbReference>
<dbReference type="InterPro" id="IPR014721">
    <property type="entry name" value="Ribsml_uS5_D2-typ_fold_subgr"/>
</dbReference>
<dbReference type="NCBIfam" id="TIGR01021">
    <property type="entry name" value="rpsE_bact"/>
    <property type="match status" value="1"/>
</dbReference>
<dbReference type="PANTHER" id="PTHR48277">
    <property type="entry name" value="MITOCHONDRIAL RIBOSOMAL PROTEIN S5"/>
    <property type="match status" value="1"/>
</dbReference>
<dbReference type="PANTHER" id="PTHR48277:SF1">
    <property type="entry name" value="MITOCHONDRIAL RIBOSOMAL PROTEIN S5"/>
    <property type="match status" value="1"/>
</dbReference>
<dbReference type="Pfam" id="PF00333">
    <property type="entry name" value="Ribosomal_S5"/>
    <property type="match status" value="1"/>
</dbReference>
<dbReference type="Pfam" id="PF03719">
    <property type="entry name" value="Ribosomal_S5_C"/>
    <property type="match status" value="1"/>
</dbReference>
<dbReference type="SUPFAM" id="SSF54768">
    <property type="entry name" value="dsRNA-binding domain-like"/>
    <property type="match status" value="1"/>
</dbReference>
<dbReference type="SUPFAM" id="SSF54211">
    <property type="entry name" value="Ribosomal protein S5 domain 2-like"/>
    <property type="match status" value="1"/>
</dbReference>
<dbReference type="PROSITE" id="PS00585">
    <property type="entry name" value="RIBOSOMAL_S5"/>
    <property type="match status" value="1"/>
</dbReference>
<dbReference type="PROSITE" id="PS50881">
    <property type="entry name" value="S5_DSRBD"/>
    <property type="match status" value="1"/>
</dbReference>